<sequence length="187" mass="21698">MPEVERKSKITASRKLMLKSLMLAKAKECWEQEHEEREAEKVRYLSERIPTLQTRGLSLSALQDLCRELHAKVEVVDEERYDIEAKCLHNTREIKDLKLKVLDLRGKFKRPPLRRVRVSADAMLRALLGSKHKVSMDLRANLKSVKKEDTEKERPVEVGDWRKNVEAMSGMEGRKKMFDAAKSPTSQ</sequence>
<evidence type="ECO:0000250" key="1">
    <source>
        <dbReference type="UniProtKB" id="P02645"/>
    </source>
</evidence>
<evidence type="ECO:0000305" key="2"/>
<evidence type="ECO:0007744" key="3">
    <source>
    </source>
</evidence>
<accession>Q9WUZ5</accession>
<feature type="initiator methionine" description="Removed" evidence="1">
    <location>
        <position position="1"/>
    </location>
</feature>
<feature type="chain" id="PRO_0000186140" description="Troponin I, slow skeletal muscle">
    <location>
        <begin position="2"/>
        <end position="187"/>
    </location>
</feature>
<feature type="region of interest" description="Involved in binding TNC">
    <location>
        <begin position="2"/>
        <end position="48"/>
    </location>
</feature>
<feature type="region of interest" description="Involved in binding TNC and actin">
    <location>
        <begin position="97"/>
        <end position="118"/>
    </location>
</feature>
<feature type="modified residue" description="N-acetylproline" evidence="1">
    <location>
        <position position="2"/>
    </location>
</feature>
<feature type="modified residue" description="Phosphoserine" evidence="3">
    <location>
        <position position="58"/>
    </location>
</feature>
<protein>
    <recommendedName>
        <fullName>Troponin I, slow skeletal muscle</fullName>
    </recommendedName>
    <alternativeName>
        <fullName>Troponin I, slow-twitch isoform</fullName>
    </alternativeName>
</protein>
<proteinExistence type="evidence at protein level"/>
<keyword id="KW-0007">Acetylation</keyword>
<keyword id="KW-0009">Actin-binding</keyword>
<keyword id="KW-0514">Muscle protein</keyword>
<keyword id="KW-0597">Phosphoprotein</keyword>
<keyword id="KW-1185">Reference proteome</keyword>
<comment type="function">
    <text>Troponin I is the inhibitory subunit of troponin, the thin filament regulatory complex which confers calcium-sensitivity to striated muscle actomyosin ATPase activity.</text>
</comment>
<comment type="subunit">
    <text>Binds to actin and tropomyosin.</text>
</comment>
<comment type="similarity">
    <text evidence="2">Belongs to the troponin I family.</text>
</comment>
<reference key="1">
    <citation type="submission" date="1999-06" db="EMBL/GenBank/DDBJ databases">
        <title>Cloning and chromosomal distribution of the mouse troponin gene families.</title>
        <authorList>
            <person name="Barton P.J.R."/>
        </authorList>
    </citation>
    <scope>NUCLEOTIDE SEQUENCE [MRNA]</scope>
    <source>
        <tissue>Skeletal muscle</tissue>
    </source>
</reference>
<reference key="2">
    <citation type="journal article" date="2005" name="Science">
        <title>The transcriptional landscape of the mammalian genome.</title>
        <authorList>
            <person name="Carninci P."/>
            <person name="Kasukawa T."/>
            <person name="Katayama S."/>
            <person name="Gough J."/>
            <person name="Frith M.C."/>
            <person name="Maeda N."/>
            <person name="Oyama R."/>
            <person name="Ravasi T."/>
            <person name="Lenhard B."/>
            <person name="Wells C."/>
            <person name="Kodzius R."/>
            <person name="Shimokawa K."/>
            <person name="Bajic V.B."/>
            <person name="Brenner S.E."/>
            <person name="Batalov S."/>
            <person name="Forrest A.R."/>
            <person name="Zavolan M."/>
            <person name="Davis M.J."/>
            <person name="Wilming L.G."/>
            <person name="Aidinis V."/>
            <person name="Allen J.E."/>
            <person name="Ambesi-Impiombato A."/>
            <person name="Apweiler R."/>
            <person name="Aturaliya R.N."/>
            <person name="Bailey T.L."/>
            <person name="Bansal M."/>
            <person name="Baxter L."/>
            <person name="Beisel K.W."/>
            <person name="Bersano T."/>
            <person name="Bono H."/>
            <person name="Chalk A.M."/>
            <person name="Chiu K.P."/>
            <person name="Choudhary V."/>
            <person name="Christoffels A."/>
            <person name="Clutterbuck D.R."/>
            <person name="Crowe M.L."/>
            <person name="Dalla E."/>
            <person name="Dalrymple B.P."/>
            <person name="de Bono B."/>
            <person name="Della Gatta G."/>
            <person name="di Bernardo D."/>
            <person name="Down T."/>
            <person name="Engstrom P."/>
            <person name="Fagiolini M."/>
            <person name="Faulkner G."/>
            <person name="Fletcher C.F."/>
            <person name="Fukushima T."/>
            <person name="Furuno M."/>
            <person name="Futaki S."/>
            <person name="Gariboldi M."/>
            <person name="Georgii-Hemming P."/>
            <person name="Gingeras T.R."/>
            <person name="Gojobori T."/>
            <person name="Green R.E."/>
            <person name="Gustincich S."/>
            <person name="Harbers M."/>
            <person name="Hayashi Y."/>
            <person name="Hensch T.K."/>
            <person name="Hirokawa N."/>
            <person name="Hill D."/>
            <person name="Huminiecki L."/>
            <person name="Iacono M."/>
            <person name="Ikeo K."/>
            <person name="Iwama A."/>
            <person name="Ishikawa T."/>
            <person name="Jakt M."/>
            <person name="Kanapin A."/>
            <person name="Katoh M."/>
            <person name="Kawasawa Y."/>
            <person name="Kelso J."/>
            <person name="Kitamura H."/>
            <person name="Kitano H."/>
            <person name="Kollias G."/>
            <person name="Krishnan S.P."/>
            <person name="Kruger A."/>
            <person name="Kummerfeld S.K."/>
            <person name="Kurochkin I.V."/>
            <person name="Lareau L.F."/>
            <person name="Lazarevic D."/>
            <person name="Lipovich L."/>
            <person name="Liu J."/>
            <person name="Liuni S."/>
            <person name="McWilliam S."/>
            <person name="Madan Babu M."/>
            <person name="Madera M."/>
            <person name="Marchionni L."/>
            <person name="Matsuda H."/>
            <person name="Matsuzawa S."/>
            <person name="Miki H."/>
            <person name="Mignone F."/>
            <person name="Miyake S."/>
            <person name="Morris K."/>
            <person name="Mottagui-Tabar S."/>
            <person name="Mulder N."/>
            <person name="Nakano N."/>
            <person name="Nakauchi H."/>
            <person name="Ng P."/>
            <person name="Nilsson R."/>
            <person name="Nishiguchi S."/>
            <person name="Nishikawa S."/>
            <person name="Nori F."/>
            <person name="Ohara O."/>
            <person name="Okazaki Y."/>
            <person name="Orlando V."/>
            <person name="Pang K.C."/>
            <person name="Pavan W.J."/>
            <person name="Pavesi G."/>
            <person name="Pesole G."/>
            <person name="Petrovsky N."/>
            <person name="Piazza S."/>
            <person name="Reed J."/>
            <person name="Reid J.F."/>
            <person name="Ring B.Z."/>
            <person name="Ringwald M."/>
            <person name="Rost B."/>
            <person name="Ruan Y."/>
            <person name="Salzberg S.L."/>
            <person name="Sandelin A."/>
            <person name="Schneider C."/>
            <person name="Schoenbach C."/>
            <person name="Sekiguchi K."/>
            <person name="Semple C.A."/>
            <person name="Seno S."/>
            <person name="Sessa L."/>
            <person name="Sheng Y."/>
            <person name="Shibata Y."/>
            <person name="Shimada H."/>
            <person name="Shimada K."/>
            <person name="Silva D."/>
            <person name="Sinclair B."/>
            <person name="Sperling S."/>
            <person name="Stupka E."/>
            <person name="Sugiura K."/>
            <person name="Sultana R."/>
            <person name="Takenaka Y."/>
            <person name="Taki K."/>
            <person name="Tammoja K."/>
            <person name="Tan S.L."/>
            <person name="Tang S."/>
            <person name="Taylor M.S."/>
            <person name="Tegner J."/>
            <person name="Teichmann S.A."/>
            <person name="Ueda H.R."/>
            <person name="van Nimwegen E."/>
            <person name="Verardo R."/>
            <person name="Wei C.L."/>
            <person name="Yagi K."/>
            <person name="Yamanishi H."/>
            <person name="Zabarovsky E."/>
            <person name="Zhu S."/>
            <person name="Zimmer A."/>
            <person name="Hide W."/>
            <person name="Bult C."/>
            <person name="Grimmond S.M."/>
            <person name="Teasdale R.D."/>
            <person name="Liu E.T."/>
            <person name="Brusic V."/>
            <person name="Quackenbush J."/>
            <person name="Wahlestedt C."/>
            <person name="Mattick J.S."/>
            <person name="Hume D.A."/>
            <person name="Kai C."/>
            <person name="Sasaki D."/>
            <person name="Tomaru Y."/>
            <person name="Fukuda S."/>
            <person name="Kanamori-Katayama M."/>
            <person name="Suzuki M."/>
            <person name="Aoki J."/>
            <person name="Arakawa T."/>
            <person name="Iida J."/>
            <person name="Imamura K."/>
            <person name="Itoh M."/>
            <person name="Kato T."/>
            <person name="Kawaji H."/>
            <person name="Kawagashira N."/>
            <person name="Kawashima T."/>
            <person name="Kojima M."/>
            <person name="Kondo S."/>
            <person name="Konno H."/>
            <person name="Nakano K."/>
            <person name="Ninomiya N."/>
            <person name="Nishio T."/>
            <person name="Okada M."/>
            <person name="Plessy C."/>
            <person name="Shibata K."/>
            <person name="Shiraki T."/>
            <person name="Suzuki S."/>
            <person name="Tagami M."/>
            <person name="Waki K."/>
            <person name="Watahiki A."/>
            <person name="Okamura-Oho Y."/>
            <person name="Suzuki H."/>
            <person name="Kawai J."/>
            <person name="Hayashizaki Y."/>
        </authorList>
    </citation>
    <scope>NUCLEOTIDE SEQUENCE [LARGE SCALE MRNA]</scope>
    <source>
        <strain>C57BL/6J</strain>
        <tissue>Embryo</tissue>
    </source>
</reference>
<reference key="3">
    <citation type="journal article" date="2004" name="Genome Res.">
        <title>The status, quality, and expansion of the NIH full-length cDNA project: the Mammalian Gene Collection (MGC).</title>
        <authorList>
            <consortium name="The MGC Project Team"/>
        </authorList>
    </citation>
    <scope>NUCLEOTIDE SEQUENCE [LARGE SCALE MRNA]</scope>
</reference>
<reference key="4">
    <citation type="journal article" date="2010" name="Cell">
        <title>A tissue-specific atlas of mouse protein phosphorylation and expression.</title>
        <authorList>
            <person name="Huttlin E.L."/>
            <person name="Jedrychowski M.P."/>
            <person name="Elias J.E."/>
            <person name="Goswami T."/>
            <person name="Rad R."/>
            <person name="Beausoleil S.A."/>
            <person name="Villen J."/>
            <person name="Haas W."/>
            <person name="Sowa M.E."/>
            <person name="Gygi S.P."/>
        </authorList>
    </citation>
    <scope>PHOSPHORYLATION [LARGE SCALE ANALYSIS] AT SER-58</scope>
    <scope>IDENTIFICATION BY MASS SPECTROMETRY [LARGE SCALE ANALYSIS]</scope>
    <source>
        <tissue>Heart</tissue>
        <tissue>Lung</tissue>
    </source>
</reference>
<gene>
    <name type="primary">Tnni1</name>
</gene>
<dbReference type="EMBL" id="AJ242874">
    <property type="protein sequence ID" value="CAB48403.1"/>
    <property type="molecule type" value="mRNA"/>
</dbReference>
<dbReference type="EMBL" id="AK012258">
    <property type="protein sequence ID" value="BAB28123.1"/>
    <property type="molecule type" value="mRNA"/>
</dbReference>
<dbReference type="EMBL" id="BC023170">
    <property type="protein sequence ID" value="AAH23170.1"/>
    <property type="molecule type" value="mRNA"/>
</dbReference>
<dbReference type="CCDS" id="CCDS48374.1"/>
<dbReference type="RefSeq" id="NP_001106173.1">
    <property type="nucleotide sequence ID" value="NM_001112702.1"/>
</dbReference>
<dbReference type="RefSeq" id="NP_067442.1">
    <property type="nucleotide sequence ID" value="NM_021467.5"/>
</dbReference>
<dbReference type="RefSeq" id="XP_006529445.1">
    <property type="nucleotide sequence ID" value="XM_006529382.4"/>
</dbReference>
<dbReference type="RefSeq" id="XP_011246276.1">
    <property type="nucleotide sequence ID" value="XM_011247974.4"/>
</dbReference>
<dbReference type="RefSeq" id="XP_036019444.1">
    <property type="nucleotide sequence ID" value="XM_036163551.1"/>
</dbReference>
<dbReference type="SMR" id="Q9WUZ5"/>
<dbReference type="FunCoup" id="Q9WUZ5">
    <property type="interactions" value="36"/>
</dbReference>
<dbReference type="STRING" id="10090.ENSMUSP00000123509"/>
<dbReference type="iPTMnet" id="Q9WUZ5"/>
<dbReference type="PhosphoSitePlus" id="Q9WUZ5"/>
<dbReference type="jPOST" id="Q9WUZ5"/>
<dbReference type="PaxDb" id="10090-ENSMUSP00000122925"/>
<dbReference type="ProteomicsDB" id="259479"/>
<dbReference type="Antibodypedia" id="3993">
    <property type="antibodies" value="385 antibodies from 29 providers"/>
</dbReference>
<dbReference type="DNASU" id="21952"/>
<dbReference type="Ensembl" id="ENSMUST00000148201.8">
    <property type="protein sequence ID" value="ENSMUSP00000123509.2"/>
    <property type="gene ID" value="ENSMUSG00000026418.17"/>
</dbReference>
<dbReference type="Ensembl" id="ENSMUST00000152075.8">
    <property type="protein sequence ID" value="ENSMUSP00000121343.2"/>
    <property type="gene ID" value="ENSMUSG00000026418.17"/>
</dbReference>
<dbReference type="Ensembl" id="ENSMUST00000152208.8">
    <property type="protein sequence ID" value="ENSMUSP00000121966.2"/>
    <property type="gene ID" value="ENSMUSG00000026418.17"/>
</dbReference>
<dbReference type="Ensembl" id="ENSMUST00000154463.8">
    <property type="protein sequence ID" value="ENSMUSP00000122925.2"/>
    <property type="gene ID" value="ENSMUSG00000026418.17"/>
</dbReference>
<dbReference type="GeneID" id="21952"/>
<dbReference type="KEGG" id="mmu:21952"/>
<dbReference type="UCSC" id="uc033flo.1">
    <property type="organism name" value="mouse"/>
</dbReference>
<dbReference type="AGR" id="MGI:105073"/>
<dbReference type="CTD" id="7135"/>
<dbReference type="MGI" id="MGI:105073">
    <property type="gene designation" value="Tnni1"/>
</dbReference>
<dbReference type="VEuPathDB" id="HostDB:ENSMUSG00000026418"/>
<dbReference type="eggNOG" id="KOG3977">
    <property type="taxonomic scope" value="Eukaryota"/>
</dbReference>
<dbReference type="GeneTree" id="ENSGT01030000234588"/>
<dbReference type="InParanoid" id="Q9WUZ5"/>
<dbReference type="OMA" id="KQDFRAN"/>
<dbReference type="OrthoDB" id="371899at2759"/>
<dbReference type="PhylomeDB" id="Q9WUZ5"/>
<dbReference type="TreeFam" id="TF313374"/>
<dbReference type="Reactome" id="R-MMU-390522">
    <property type="pathway name" value="Striated Muscle Contraction"/>
</dbReference>
<dbReference type="BioGRID-ORCS" id="21952">
    <property type="hits" value="1 hit in 77 CRISPR screens"/>
</dbReference>
<dbReference type="ChiTaRS" id="Tnni1">
    <property type="organism name" value="mouse"/>
</dbReference>
<dbReference type="PRO" id="PR:Q9WUZ5"/>
<dbReference type="Proteomes" id="UP000000589">
    <property type="component" value="Chromosome 1"/>
</dbReference>
<dbReference type="RNAct" id="Q9WUZ5">
    <property type="molecule type" value="protein"/>
</dbReference>
<dbReference type="Bgee" id="ENSMUSG00000026418">
    <property type="expression patterns" value="Expressed in soleus muscle and 117 other cell types or tissues"/>
</dbReference>
<dbReference type="ExpressionAtlas" id="Q9WUZ5">
    <property type="expression patterns" value="baseline and differential"/>
</dbReference>
<dbReference type="GO" id="GO:0005861">
    <property type="term" value="C:troponin complex"/>
    <property type="evidence" value="ECO:0007669"/>
    <property type="project" value="InterPro"/>
</dbReference>
<dbReference type="GO" id="GO:0003779">
    <property type="term" value="F:actin binding"/>
    <property type="evidence" value="ECO:0007669"/>
    <property type="project" value="UniProtKB-KW"/>
</dbReference>
<dbReference type="GO" id="GO:0014883">
    <property type="term" value="P:transition between fast and slow fiber"/>
    <property type="evidence" value="ECO:0000314"/>
    <property type="project" value="MGI"/>
</dbReference>
<dbReference type="GO" id="GO:0055010">
    <property type="term" value="P:ventricular cardiac muscle tissue morphogenesis"/>
    <property type="evidence" value="ECO:0000315"/>
    <property type="project" value="MGI"/>
</dbReference>
<dbReference type="FunFam" id="1.20.5.350:FF:000002">
    <property type="entry name" value="troponin I, fast skeletal muscle"/>
    <property type="match status" value="1"/>
</dbReference>
<dbReference type="Gene3D" id="1.20.5.350">
    <property type="match status" value="1"/>
</dbReference>
<dbReference type="Gene3D" id="6.10.250.180">
    <property type="match status" value="1"/>
</dbReference>
<dbReference type="InterPro" id="IPR001978">
    <property type="entry name" value="Troponin"/>
</dbReference>
<dbReference type="InterPro" id="IPR050875">
    <property type="entry name" value="Troponin_I"/>
</dbReference>
<dbReference type="InterPro" id="IPR038077">
    <property type="entry name" value="Troponin_sf"/>
</dbReference>
<dbReference type="PANTHER" id="PTHR13738">
    <property type="entry name" value="TROPONIN I"/>
    <property type="match status" value="1"/>
</dbReference>
<dbReference type="PANTHER" id="PTHR13738:SF9">
    <property type="entry name" value="TROPONIN I, SLOW SKELETAL MUSCLE"/>
    <property type="match status" value="1"/>
</dbReference>
<dbReference type="Pfam" id="PF00992">
    <property type="entry name" value="Troponin"/>
    <property type="match status" value="1"/>
</dbReference>
<dbReference type="SUPFAM" id="SSF90250">
    <property type="entry name" value="Troponin coil-coiled subunits"/>
    <property type="match status" value="1"/>
</dbReference>
<name>TNNI1_MOUSE</name>
<organism>
    <name type="scientific">Mus musculus</name>
    <name type="common">Mouse</name>
    <dbReference type="NCBI Taxonomy" id="10090"/>
    <lineage>
        <taxon>Eukaryota</taxon>
        <taxon>Metazoa</taxon>
        <taxon>Chordata</taxon>
        <taxon>Craniata</taxon>
        <taxon>Vertebrata</taxon>
        <taxon>Euteleostomi</taxon>
        <taxon>Mammalia</taxon>
        <taxon>Eutheria</taxon>
        <taxon>Euarchontoglires</taxon>
        <taxon>Glires</taxon>
        <taxon>Rodentia</taxon>
        <taxon>Myomorpha</taxon>
        <taxon>Muroidea</taxon>
        <taxon>Muridae</taxon>
        <taxon>Murinae</taxon>
        <taxon>Mus</taxon>
        <taxon>Mus</taxon>
    </lineage>
</organism>